<comment type="function">
    <text evidence="1">One of the early assembly proteins it binds 23S rRNA. One of the proteins that surrounds the polypeptide exit tunnel on the outside of the ribosome. Forms the main docking site for trigger factor binding to the ribosome.</text>
</comment>
<comment type="subunit">
    <text evidence="1">Part of the 50S ribosomal subunit. Contacts protein L29, and trigger factor when it is bound to the ribosome.</text>
</comment>
<comment type="similarity">
    <text evidence="1">Belongs to the universal ribosomal protein uL23 family.</text>
</comment>
<name>RL23_METFK</name>
<keyword id="KW-1185">Reference proteome</keyword>
<keyword id="KW-0687">Ribonucleoprotein</keyword>
<keyword id="KW-0689">Ribosomal protein</keyword>
<keyword id="KW-0694">RNA-binding</keyword>
<keyword id="KW-0699">rRNA-binding</keyword>
<accession>Q1H4N5</accession>
<feature type="chain" id="PRO_0000272773" description="Large ribosomal subunit protein uL23">
    <location>
        <begin position="1"/>
        <end position="102"/>
    </location>
</feature>
<gene>
    <name evidence="1" type="primary">rplW</name>
    <name type="ordered locus">Mfla_0281</name>
</gene>
<dbReference type="EMBL" id="CP000284">
    <property type="protein sequence ID" value="ABE48552.1"/>
    <property type="molecule type" value="Genomic_DNA"/>
</dbReference>
<dbReference type="RefSeq" id="WP_011478649.1">
    <property type="nucleotide sequence ID" value="NC_007947.1"/>
</dbReference>
<dbReference type="SMR" id="Q1H4N5"/>
<dbReference type="STRING" id="265072.Mfla_0281"/>
<dbReference type="KEGG" id="mfa:Mfla_0281"/>
<dbReference type="eggNOG" id="COG0089">
    <property type="taxonomic scope" value="Bacteria"/>
</dbReference>
<dbReference type="HOGENOM" id="CLU_037562_3_1_4"/>
<dbReference type="OrthoDB" id="9793353at2"/>
<dbReference type="Proteomes" id="UP000002440">
    <property type="component" value="Chromosome"/>
</dbReference>
<dbReference type="GO" id="GO:1990904">
    <property type="term" value="C:ribonucleoprotein complex"/>
    <property type="evidence" value="ECO:0007669"/>
    <property type="project" value="UniProtKB-KW"/>
</dbReference>
<dbReference type="GO" id="GO:0005840">
    <property type="term" value="C:ribosome"/>
    <property type="evidence" value="ECO:0007669"/>
    <property type="project" value="UniProtKB-KW"/>
</dbReference>
<dbReference type="GO" id="GO:0019843">
    <property type="term" value="F:rRNA binding"/>
    <property type="evidence" value="ECO:0007669"/>
    <property type="project" value="UniProtKB-UniRule"/>
</dbReference>
<dbReference type="GO" id="GO:0003735">
    <property type="term" value="F:structural constituent of ribosome"/>
    <property type="evidence" value="ECO:0007669"/>
    <property type="project" value="InterPro"/>
</dbReference>
<dbReference type="GO" id="GO:0006412">
    <property type="term" value="P:translation"/>
    <property type="evidence" value="ECO:0007669"/>
    <property type="project" value="UniProtKB-UniRule"/>
</dbReference>
<dbReference type="FunFam" id="3.30.70.330:FF:000001">
    <property type="entry name" value="50S ribosomal protein L23"/>
    <property type="match status" value="1"/>
</dbReference>
<dbReference type="Gene3D" id="3.30.70.330">
    <property type="match status" value="1"/>
</dbReference>
<dbReference type="HAMAP" id="MF_01369_B">
    <property type="entry name" value="Ribosomal_uL23_B"/>
    <property type="match status" value="1"/>
</dbReference>
<dbReference type="InterPro" id="IPR012677">
    <property type="entry name" value="Nucleotide-bd_a/b_plait_sf"/>
</dbReference>
<dbReference type="InterPro" id="IPR013025">
    <property type="entry name" value="Ribosomal_uL23-like"/>
</dbReference>
<dbReference type="InterPro" id="IPR012678">
    <property type="entry name" value="Ribosomal_uL23/eL15/eS24_sf"/>
</dbReference>
<dbReference type="NCBIfam" id="NF004359">
    <property type="entry name" value="PRK05738.1-3"/>
    <property type="match status" value="1"/>
</dbReference>
<dbReference type="NCBIfam" id="NF004363">
    <property type="entry name" value="PRK05738.2-4"/>
    <property type="match status" value="1"/>
</dbReference>
<dbReference type="PANTHER" id="PTHR11620">
    <property type="entry name" value="60S RIBOSOMAL PROTEIN L23A"/>
    <property type="match status" value="1"/>
</dbReference>
<dbReference type="Pfam" id="PF00276">
    <property type="entry name" value="Ribosomal_L23"/>
    <property type="match status" value="1"/>
</dbReference>
<dbReference type="SUPFAM" id="SSF54189">
    <property type="entry name" value="Ribosomal proteins S24e, L23 and L15e"/>
    <property type="match status" value="1"/>
</dbReference>
<proteinExistence type="inferred from homology"/>
<reference key="1">
    <citation type="submission" date="2006-03" db="EMBL/GenBank/DDBJ databases">
        <title>Complete sequence of Methylobacillus flagellatus KT.</title>
        <authorList>
            <consortium name="US DOE Joint Genome Institute"/>
            <person name="Copeland A."/>
            <person name="Lucas S."/>
            <person name="Lapidus A."/>
            <person name="Barry K."/>
            <person name="Detter J.C."/>
            <person name="Glavina del Rio T."/>
            <person name="Hammon N."/>
            <person name="Israni S."/>
            <person name="Dalin E."/>
            <person name="Tice H."/>
            <person name="Pitluck S."/>
            <person name="Brettin T."/>
            <person name="Bruce D."/>
            <person name="Han C."/>
            <person name="Tapia R."/>
            <person name="Saunders E."/>
            <person name="Gilna P."/>
            <person name="Schmutz J."/>
            <person name="Larimer F."/>
            <person name="Land M."/>
            <person name="Kyrpides N."/>
            <person name="Anderson I."/>
            <person name="Richardson P."/>
        </authorList>
    </citation>
    <scope>NUCLEOTIDE SEQUENCE [LARGE SCALE GENOMIC DNA]</scope>
    <source>
        <strain>ATCC 51484 / DSM 6875 / VKM B-1610 / KT</strain>
    </source>
</reference>
<evidence type="ECO:0000255" key="1">
    <source>
        <dbReference type="HAMAP-Rule" id="MF_01369"/>
    </source>
</evidence>
<evidence type="ECO:0000305" key="2"/>
<organism>
    <name type="scientific">Methylobacillus flagellatus (strain ATCC 51484 / DSM 6875 / VKM B-1610 / KT)</name>
    <dbReference type="NCBI Taxonomy" id="265072"/>
    <lineage>
        <taxon>Bacteria</taxon>
        <taxon>Pseudomonadati</taxon>
        <taxon>Pseudomonadota</taxon>
        <taxon>Betaproteobacteria</taxon>
        <taxon>Nitrosomonadales</taxon>
        <taxon>Methylophilaceae</taxon>
        <taxon>Methylobacillus</taxon>
    </lineage>
</organism>
<sequence length="102" mass="11347">MSALSTQERLLQVILAPQITEKATRVADKYQQIAFRVRTDATKPEIKAAVELVFKVEVDSVTVVNVGGKVKRAGRTFGRRKDWKKAYVSLKPGQEINFAAGE</sequence>
<protein>
    <recommendedName>
        <fullName evidence="1">Large ribosomal subunit protein uL23</fullName>
    </recommendedName>
    <alternativeName>
        <fullName evidence="2">50S ribosomal protein L23</fullName>
    </alternativeName>
</protein>